<proteinExistence type="inferred from homology"/>
<dbReference type="EMBL" id="AE005174">
    <property type="protein sequence ID" value="AAG58780.1"/>
    <property type="molecule type" value="Genomic_DNA"/>
</dbReference>
<dbReference type="EMBL" id="BA000007">
    <property type="protein sequence ID" value="BAB37934.1"/>
    <property type="molecule type" value="Genomic_DNA"/>
</dbReference>
<dbReference type="PIR" id="G91192">
    <property type="entry name" value="G91192"/>
</dbReference>
<dbReference type="PIR" id="H86039">
    <property type="entry name" value="H86039"/>
</dbReference>
<dbReference type="RefSeq" id="NP_312538.1">
    <property type="nucleotide sequence ID" value="NC_002695.1"/>
</dbReference>
<dbReference type="RefSeq" id="WP_001051798.1">
    <property type="nucleotide sequence ID" value="NZ_VOAI01000021.1"/>
</dbReference>
<dbReference type="SMR" id="P0A7P1"/>
<dbReference type="STRING" id="155864.Z5060"/>
<dbReference type="GeneID" id="915536"/>
<dbReference type="GeneID" id="97607673"/>
<dbReference type="KEGG" id="ece:Z5060"/>
<dbReference type="KEGG" id="ecs:ECs_4511"/>
<dbReference type="PATRIC" id="fig|386585.9.peg.4727"/>
<dbReference type="eggNOG" id="COG0267">
    <property type="taxonomic scope" value="Bacteria"/>
</dbReference>
<dbReference type="HOGENOM" id="CLU_190949_1_1_6"/>
<dbReference type="OMA" id="RMTLRKY"/>
<dbReference type="Proteomes" id="UP000000558">
    <property type="component" value="Chromosome"/>
</dbReference>
<dbReference type="Proteomes" id="UP000002519">
    <property type="component" value="Chromosome"/>
</dbReference>
<dbReference type="GO" id="GO:0022625">
    <property type="term" value="C:cytosolic large ribosomal subunit"/>
    <property type="evidence" value="ECO:0007669"/>
    <property type="project" value="TreeGrafter"/>
</dbReference>
<dbReference type="GO" id="GO:0003735">
    <property type="term" value="F:structural constituent of ribosome"/>
    <property type="evidence" value="ECO:0007669"/>
    <property type="project" value="InterPro"/>
</dbReference>
<dbReference type="GO" id="GO:0000049">
    <property type="term" value="F:tRNA binding"/>
    <property type="evidence" value="ECO:0007669"/>
    <property type="project" value="UniProtKB-KW"/>
</dbReference>
<dbReference type="GO" id="GO:0006412">
    <property type="term" value="P:translation"/>
    <property type="evidence" value="ECO:0007669"/>
    <property type="project" value="UniProtKB-UniRule"/>
</dbReference>
<dbReference type="FunFam" id="2.20.28.120:FF:000001">
    <property type="entry name" value="50S ribosomal protein L33"/>
    <property type="match status" value="1"/>
</dbReference>
<dbReference type="Gene3D" id="2.20.28.120">
    <property type="entry name" value="Ribosomal protein L33"/>
    <property type="match status" value="1"/>
</dbReference>
<dbReference type="HAMAP" id="MF_00294">
    <property type="entry name" value="Ribosomal_bL33"/>
    <property type="match status" value="1"/>
</dbReference>
<dbReference type="InterPro" id="IPR001705">
    <property type="entry name" value="Ribosomal_bL33"/>
</dbReference>
<dbReference type="InterPro" id="IPR018264">
    <property type="entry name" value="Ribosomal_bL33_CS"/>
</dbReference>
<dbReference type="InterPro" id="IPR038584">
    <property type="entry name" value="Ribosomal_bL33_sf"/>
</dbReference>
<dbReference type="InterPro" id="IPR011332">
    <property type="entry name" value="Ribosomal_zn-bd"/>
</dbReference>
<dbReference type="NCBIfam" id="NF001860">
    <property type="entry name" value="PRK00595.1"/>
    <property type="match status" value="1"/>
</dbReference>
<dbReference type="NCBIfam" id="TIGR01023">
    <property type="entry name" value="rpmG_bact"/>
    <property type="match status" value="1"/>
</dbReference>
<dbReference type="PANTHER" id="PTHR15238">
    <property type="entry name" value="54S RIBOSOMAL PROTEIN L39, MITOCHONDRIAL"/>
    <property type="match status" value="1"/>
</dbReference>
<dbReference type="PANTHER" id="PTHR15238:SF1">
    <property type="entry name" value="LARGE RIBOSOMAL SUBUNIT PROTEIN BL33M"/>
    <property type="match status" value="1"/>
</dbReference>
<dbReference type="Pfam" id="PF00471">
    <property type="entry name" value="Ribosomal_L33"/>
    <property type="match status" value="1"/>
</dbReference>
<dbReference type="SUPFAM" id="SSF57829">
    <property type="entry name" value="Zn-binding ribosomal proteins"/>
    <property type="match status" value="1"/>
</dbReference>
<dbReference type="PROSITE" id="PS00582">
    <property type="entry name" value="RIBOSOMAL_L33"/>
    <property type="match status" value="1"/>
</dbReference>
<feature type="initiator methionine" description="Removed" evidence="1">
    <location>
        <position position="1"/>
    </location>
</feature>
<feature type="chain" id="PRO_0000170160" description="Large ribosomal subunit protein bL33">
    <location>
        <begin position="2"/>
        <end position="55"/>
    </location>
</feature>
<feature type="modified residue" description="N-methylalanine" evidence="1">
    <location>
        <position position="2"/>
    </location>
</feature>
<name>RL33_ECO57</name>
<comment type="subunit">
    <text evidence="1">Part of the 50S ribosomal subunit. Cross-links to the P and E site tRNAs (By similarity).</text>
</comment>
<comment type="miscellaneous">
    <text evidence="1">Surface exposed on the 50S subunit.</text>
</comment>
<comment type="similarity">
    <text evidence="2">Belongs to the bacterial ribosomal protein bL33 family.</text>
</comment>
<accession>P0A7P1</accession>
<accession>P02436</accession>
<gene>
    <name type="primary">rpmG</name>
    <name type="ordered locus">Z5060</name>
    <name type="ordered locus">ECs4511</name>
</gene>
<evidence type="ECO:0000250" key="1"/>
<evidence type="ECO:0000305" key="2"/>
<organism>
    <name type="scientific">Escherichia coli O157:H7</name>
    <dbReference type="NCBI Taxonomy" id="83334"/>
    <lineage>
        <taxon>Bacteria</taxon>
        <taxon>Pseudomonadati</taxon>
        <taxon>Pseudomonadota</taxon>
        <taxon>Gammaproteobacteria</taxon>
        <taxon>Enterobacterales</taxon>
        <taxon>Enterobacteriaceae</taxon>
        <taxon>Escherichia</taxon>
    </lineage>
</organism>
<reference key="1">
    <citation type="journal article" date="2001" name="Nature">
        <title>Genome sequence of enterohaemorrhagic Escherichia coli O157:H7.</title>
        <authorList>
            <person name="Perna N.T."/>
            <person name="Plunkett G. III"/>
            <person name="Burland V."/>
            <person name="Mau B."/>
            <person name="Glasner J.D."/>
            <person name="Rose D.J."/>
            <person name="Mayhew G.F."/>
            <person name="Evans P.S."/>
            <person name="Gregor J."/>
            <person name="Kirkpatrick H.A."/>
            <person name="Posfai G."/>
            <person name="Hackett J."/>
            <person name="Klink S."/>
            <person name="Boutin A."/>
            <person name="Shao Y."/>
            <person name="Miller L."/>
            <person name="Grotbeck E.J."/>
            <person name="Davis N.W."/>
            <person name="Lim A."/>
            <person name="Dimalanta E.T."/>
            <person name="Potamousis K."/>
            <person name="Apodaca J."/>
            <person name="Anantharaman T.S."/>
            <person name="Lin J."/>
            <person name="Yen G."/>
            <person name="Schwartz D.C."/>
            <person name="Welch R.A."/>
            <person name="Blattner F.R."/>
        </authorList>
    </citation>
    <scope>NUCLEOTIDE SEQUENCE [LARGE SCALE GENOMIC DNA]</scope>
    <source>
        <strain>O157:H7 / EDL933 / ATCC 700927 / EHEC</strain>
    </source>
</reference>
<reference key="2">
    <citation type="journal article" date="2001" name="DNA Res.">
        <title>Complete genome sequence of enterohemorrhagic Escherichia coli O157:H7 and genomic comparison with a laboratory strain K-12.</title>
        <authorList>
            <person name="Hayashi T."/>
            <person name="Makino K."/>
            <person name="Ohnishi M."/>
            <person name="Kurokawa K."/>
            <person name="Ishii K."/>
            <person name="Yokoyama K."/>
            <person name="Han C.-G."/>
            <person name="Ohtsubo E."/>
            <person name="Nakayama K."/>
            <person name="Murata T."/>
            <person name="Tanaka M."/>
            <person name="Tobe T."/>
            <person name="Iida T."/>
            <person name="Takami H."/>
            <person name="Honda T."/>
            <person name="Sasakawa C."/>
            <person name="Ogasawara N."/>
            <person name="Yasunaga T."/>
            <person name="Kuhara S."/>
            <person name="Shiba T."/>
            <person name="Hattori M."/>
            <person name="Shinagawa H."/>
        </authorList>
    </citation>
    <scope>NUCLEOTIDE SEQUENCE [LARGE SCALE GENOMIC DNA]</scope>
    <source>
        <strain>O157:H7 / Sakai / RIMD 0509952 / EHEC</strain>
    </source>
</reference>
<keyword id="KW-0488">Methylation</keyword>
<keyword id="KW-1185">Reference proteome</keyword>
<keyword id="KW-0687">Ribonucleoprotein</keyword>
<keyword id="KW-0689">Ribosomal protein</keyword>
<keyword id="KW-0694">RNA-binding</keyword>
<keyword id="KW-0820">tRNA-binding</keyword>
<sequence length="55" mass="6372">MAKGIREKIKLVSSAGTGHFYTTTKNKRTKPEKLELKKFDPVVRQHVIYKEAKIK</sequence>
<protein>
    <recommendedName>
        <fullName evidence="2">Large ribosomal subunit protein bL33</fullName>
    </recommendedName>
    <alternativeName>
        <fullName>50S ribosomal protein L33</fullName>
    </alternativeName>
</protein>